<reference key="1">
    <citation type="submission" date="2003-11" db="EMBL/GenBank/DDBJ databases">
        <title>Whole genome sequence of Porphyra yezoensis chloroplast.</title>
        <authorList>
            <person name="Kunimoto M."/>
            <person name="Morishima K."/>
            <person name="Yoshikawa M."/>
            <person name="Fukuda S."/>
            <person name="Kobayashi T."/>
            <person name="Kobayashi M."/>
            <person name="Okazaki T."/>
            <person name="Ohara I."/>
            <person name="Nakayama I."/>
        </authorList>
    </citation>
    <scope>NUCLEOTIDE SEQUENCE [LARGE SCALE GENOMIC DNA]</scope>
    <source>
        <strain>U-51</strain>
    </source>
</reference>
<name>SECG_PYRYE</name>
<dbReference type="EMBL" id="AP006715">
    <property type="protein sequence ID" value="BAE92399.1"/>
    <property type="molecule type" value="Genomic_DNA"/>
</dbReference>
<dbReference type="RefSeq" id="YP_536956.1">
    <property type="nucleotide sequence ID" value="NC_007932.1"/>
</dbReference>
<dbReference type="SMR" id="Q1XDL2"/>
<dbReference type="GO" id="GO:0009535">
    <property type="term" value="C:chloroplast thylakoid membrane"/>
    <property type="evidence" value="ECO:0007669"/>
    <property type="project" value="UniProtKB-SubCell"/>
</dbReference>
<dbReference type="GO" id="GO:0015450">
    <property type="term" value="F:protein-transporting ATPase activity"/>
    <property type="evidence" value="ECO:0007669"/>
    <property type="project" value="InterPro"/>
</dbReference>
<dbReference type="GO" id="GO:0009306">
    <property type="term" value="P:protein secretion"/>
    <property type="evidence" value="ECO:0007669"/>
    <property type="project" value="InterPro"/>
</dbReference>
<dbReference type="InterPro" id="IPR004692">
    <property type="entry name" value="SecG"/>
</dbReference>
<dbReference type="NCBIfam" id="TIGR00810">
    <property type="entry name" value="secG"/>
    <property type="match status" value="1"/>
</dbReference>
<dbReference type="Pfam" id="PF03840">
    <property type="entry name" value="SecG"/>
    <property type="match status" value="1"/>
</dbReference>
<sequence>MEQILKFFWYSSTIILIFTILIHNPKSEGLGSVGAQNQFFSNTRSTENTLNKITWLFLVLFLLLTTIIAVS</sequence>
<organism>
    <name type="scientific">Pyropia yezoensis</name>
    <name type="common">Susabi-nori</name>
    <name type="synonym">Porphyra yezoensis</name>
    <dbReference type="NCBI Taxonomy" id="2788"/>
    <lineage>
        <taxon>Eukaryota</taxon>
        <taxon>Rhodophyta</taxon>
        <taxon>Bangiophyceae</taxon>
        <taxon>Bangiales</taxon>
        <taxon>Bangiaceae</taxon>
        <taxon>Pyropia</taxon>
    </lineage>
</organism>
<evidence type="ECO:0000255" key="1"/>
<evidence type="ECO:0000305" key="2"/>
<feature type="chain" id="PRO_0000277345" description="Probable protein-export membrane protein secG">
    <location>
        <begin position="1"/>
        <end position="71"/>
    </location>
</feature>
<feature type="transmembrane region" description="Helical" evidence="1">
    <location>
        <begin position="4"/>
        <end position="24"/>
    </location>
</feature>
<feature type="transmembrane region" description="Helical" evidence="1">
    <location>
        <begin position="50"/>
        <end position="70"/>
    </location>
</feature>
<protein>
    <recommendedName>
        <fullName>Probable protein-export membrane protein secG</fullName>
    </recommendedName>
</protein>
<comment type="function">
    <text evidence="2">Involved in protein export. Participates in an early event of protein translocation across the chloroplast thylakoid membrane (Potential).</text>
</comment>
<comment type="subcellular location">
    <subcellularLocation>
        <location evidence="2">Plastid</location>
        <location evidence="2">Chloroplast thylakoid membrane</location>
        <topology evidence="2">Multi-pass membrane protein</topology>
    </subcellularLocation>
</comment>
<comment type="similarity">
    <text evidence="2">Belongs to the SecG family.</text>
</comment>
<proteinExistence type="inferred from homology"/>
<accession>Q1XDL2</accession>
<gene>
    <name type="primary">secG</name>
    <name type="synonym">ycf47</name>
</gene>
<keyword id="KW-0150">Chloroplast</keyword>
<keyword id="KW-0472">Membrane</keyword>
<keyword id="KW-0934">Plastid</keyword>
<keyword id="KW-0653">Protein transport</keyword>
<keyword id="KW-0793">Thylakoid</keyword>
<keyword id="KW-0811">Translocation</keyword>
<keyword id="KW-0812">Transmembrane</keyword>
<keyword id="KW-1133">Transmembrane helix</keyword>
<keyword id="KW-0813">Transport</keyword>
<geneLocation type="chloroplast"/>